<evidence type="ECO:0000255" key="1">
    <source>
        <dbReference type="HAMAP-Rule" id="MF_00199"/>
    </source>
</evidence>
<feature type="chain" id="PRO_1000118695" description="Bis(5'-nucleosyl)-tetraphosphatase, symmetrical">
    <location>
        <begin position="1"/>
        <end position="280"/>
    </location>
</feature>
<dbReference type="EC" id="3.6.1.41" evidence="1"/>
<dbReference type="EMBL" id="CU928163">
    <property type="protein sequence ID" value="CAR11274.1"/>
    <property type="molecule type" value="Genomic_DNA"/>
</dbReference>
<dbReference type="RefSeq" id="WP_000257178.1">
    <property type="nucleotide sequence ID" value="NC_011751.1"/>
</dbReference>
<dbReference type="RefSeq" id="YP_002410829.1">
    <property type="nucleotide sequence ID" value="NC_011751.1"/>
</dbReference>
<dbReference type="SMR" id="B7N7S4"/>
<dbReference type="STRING" id="585056.ECUMN_0051"/>
<dbReference type="KEGG" id="eum:ECUMN_0051"/>
<dbReference type="PATRIC" id="fig|585056.7.peg.238"/>
<dbReference type="HOGENOM" id="CLU_056184_2_0_6"/>
<dbReference type="Proteomes" id="UP000007097">
    <property type="component" value="Chromosome"/>
</dbReference>
<dbReference type="GO" id="GO:0008803">
    <property type="term" value="F:bis(5'-nucleosyl)-tetraphosphatase (symmetrical) activity"/>
    <property type="evidence" value="ECO:0007669"/>
    <property type="project" value="UniProtKB-UniRule"/>
</dbReference>
<dbReference type="CDD" id="cd07422">
    <property type="entry name" value="MPP_ApaH"/>
    <property type="match status" value="1"/>
</dbReference>
<dbReference type="FunFam" id="3.60.21.10:FF:000013">
    <property type="entry name" value="Bis(5'-nucleosyl)-tetraphosphatase, symmetrical"/>
    <property type="match status" value="1"/>
</dbReference>
<dbReference type="Gene3D" id="3.60.21.10">
    <property type="match status" value="1"/>
</dbReference>
<dbReference type="HAMAP" id="MF_00199">
    <property type="entry name" value="ApaH"/>
    <property type="match status" value="1"/>
</dbReference>
<dbReference type="InterPro" id="IPR004617">
    <property type="entry name" value="ApaH"/>
</dbReference>
<dbReference type="InterPro" id="IPR004843">
    <property type="entry name" value="Calcineurin-like_PHP_ApaH"/>
</dbReference>
<dbReference type="InterPro" id="IPR029052">
    <property type="entry name" value="Metallo-depent_PP-like"/>
</dbReference>
<dbReference type="NCBIfam" id="TIGR00668">
    <property type="entry name" value="apaH"/>
    <property type="match status" value="1"/>
</dbReference>
<dbReference type="NCBIfam" id="NF001204">
    <property type="entry name" value="PRK00166.1"/>
    <property type="match status" value="1"/>
</dbReference>
<dbReference type="PANTHER" id="PTHR40942">
    <property type="match status" value="1"/>
</dbReference>
<dbReference type="PANTHER" id="PTHR40942:SF4">
    <property type="entry name" value="CYTOCHROME C5"/>
    <property type="match status" value="1"/>
</dbReference>
<dbReference type="Pfam" id="PF00149">
    <property type="entry name" value="Metallophos"/>
    <property type="match status" value="1"/>
</dbReference>
<dbReference type="PIRSF" id="PIRSF000903">
    <property type="entry name" value="B5n-ttraPtase_sm"/>
    <property type="match status" value="1"/>
</dbReference>
<dbReference type="SUPFAM" id="SSF56300">
    <property type="entry name" value="Metallo-dependent phosphatases"/>
    <property type="match status" value="1"/>
</dbReference>
<accession>B7N7S4</accession>
<name>APAH_ECOLU</name>
<gene>
    <name evidence="1" type="primary">apaH</name>
    <name type="ordered locus">ECUMN_0051</name>
</gene>
<organism>
    <name type="scientific">Escherichia coli O17:K52:H18 (strain UMN026 / ExPEC)</name>
    <dbReference type="NCBI Taxonomy" id="585056"/>
    <lineage>
        <taxon>Bacteria</taxon>
        <taxon>Pseudomonadati</taxon>
        <taxon>Pseudomonadota</taxon>
        <taxon>Gammaproteobacteria</taxon>
        <taxon>Enterobacterales</taxon>
        <taxon>Enterobacteriaceae</taxon>
        <taxon>Escherichia</taxon>
    </lineage>
</organism>
<reference key="1">
    <citation type="journal article" date="2009" name="PLoS Genet.">
        <title>Organised genome dynamics in the Escherichia coli species results in highly diverse adaptive paths.</title>
        <authorList>
            <person name="Touchon M."/>
            <person name="Hoede C."/>
            <person name="Tenaillon O."/>
            <person name="Barbe V."/>
            <person name="Baeriswyl S."/>
            <person name="Bidet P."/>
            <person name="Bingen E."/>
            <person name="Bonacorsi S."/>
            <person name="Bouchier C."/>
            <person name="Bouvet O."/>
            <person name="Calteau A."/>
            <person name="Chiapello H."/>
            <person name="Clermont O."/>
            <person name="Cruveiller S."/>
            <person name="Danchin A."/>
            <person name="Diard M."/>
            <person name="Dossat C."/>
            <person name="Karoui M.E."/>
            <person name="Frapy E."/>
            <person name="Garry L."/>
            <person name="Ghigo J.M."/>
            <person name="Gilles A.M."/>
            <person name="Johnson J."/>
            <person name="Le Bouguenec C."/>
            <person name="Lescat M."/>
            <person name="Mangenot S."/>
            <person name="Martinez-Jehanne V."/>
            <person name="Matic I."/>
            <person name="Nassif X."/>
            <person name="Oztas S."/>
            <person name="Petit M.A."/>
            <person name="Pichon C."/>
            <person name="Rouy Z."/>
            <person name="Ruf C.S."/>
            <person name="Schneider D."/>
            <person name="Tourret J."/>
            <person name="Vacherie B."/>
            <person name="Vallenet D."/>
            <person name="Medigue C."/>
            <person name="Rocha E.P.C."/>
            <person name="Denamur E."/>
        </authorList>
    </citation>
    <scope>NUCLEOTIDE SEQUENCE [LARGE SCALE GENOMIC DNA]</scope>
    <source>
        <strain>UMN026 / ExPEC</strain>
    </source>
</reference>
<sequence length="280" mass="31306">MATYLIGDVHGCYDELIALLHKVEFTPGKDTLWLTGDLVARGPGSLDVLRYVKSLGDSVRLVLGNHDLHLLAVFAGISRNKPKDRLTPLLEAPDADELLNWLRRQPLLQIDEEKKLVMAHAGITPQWDLKTAKECARDVEAVLSSDSYPFFLDAMYGDMPNNWSPELRGLGRLRFITNAFTRMRFCFPNGQLDMYSKESPEEAPAPLKPWFAIPGPVAEEYSIAFGHWASLEGKGTPEGIYALDTGCCWGGTLTCLRWEDKHYFVQPSNRHKDLGEAAAS</sequence>
<protein>
    <recommendedName>
        <fullName evidence="1">Bis(5'-nucleosyl)-tetraphosphatase, symmetrical</fullName>
        <ecNumber evidence="1">3.6.1.41</ecNumber>
    </recommendedName>
    <alternativeName>
        <fullName evidence="1">Ap4A hydrolase</fullName>
    </alternativeName>
    <alternativeName>
        <fullName evidence="1">Diadenosine 5',5'''-P1,P4-tetraphosphate pyrophosphohydrolase</fullName>
    </alternativeName>
    <alternativeName>
        <fullName evidence="1">Diadenosine tetraphosphatase</fullName>
    </alternativeName>
</protein>
<keyword id="KW-0378">Hydrolase</keyword>
<comment type="function">
    <text evidence="1">Hydrolyzes diadenosine 5',5'''-P1,P4-tetraphosphate to yield ADP.</text>
</comment>
<comment type="catalytic activity">
    <reaction evidence="1">
        <text>P(1),P(4)-bis(5'-adenosyl) tetraphosphate + H2O = 2 ADP + 2 H(+)</text>
        <dbReference type="Rhea" id="RHEA:24252"/>
        <dbReference type="ChEBI" id="CHEBI:15377"/>
        <dbReference type="ChEBI" id="CHEBI:15378"/>
        <dbReference type="ChEBI" id="CHEBI:58141"/>
        <dbReference type="ChEBI" id="CHEBI:456216"/>
        <dbReference type="EC" id="3.6.1.41"/>
    </reaction>
</comment>
<comment type="similarity">
    <text evidence="1">Belongs to the Ap4A hydrolase family.</text>
</comment>
<proteinExistence type="inferred from homology"/>